<proteinExistence type="predicted"/>
<dbReference type="EMBL" id="Y09555">
    <property type="protein sequence ID" value="CAA70746.1"/>
    <property type="status" value="ALT_INIT"/>
    <property type="molecule type" value="Genomic_DNA"/>
</dbReference>
<dbReference type="EMBL" id="D86239">
    <property type="protein sequence ID" value="BAA13051.1"/>
    <property type="status" value="ALT_INIT"/>
    <property type="molecule type" value="Genomic_DNA"/>
</dbReference>
<dbReference type="EMBL" id="U73857">
    <property type="protein sequence ID" value="AAB18070.1"/>
    <property type="status" value="ALT_INIT"/>
    <property type="molecule type" value="Genomic_DNA"/>
</dbReference>
<dbReference type="EMBL" id="U00096">
    <property type="protein sequence ID" value="AAC73449.2"/>
    <property type="molecule type" value="Genomic_DNA"/>
</dbReference>
<dbReference type="EMBL" id="AP009048">
    <property type="protein sequence ID" value="BAE76128.1"/>
    <property type="status" value="ALT_INIT"/>
    <property type="molecule type" value="Genomic_DNA"/>
</dbReference>
<dbReference type="PIR" id="B64762">
    <property type="entry name" value="B64762"/>
</dbReference>
<dbReference type="RefSeq" id="NP_414880.2">
    <property type="nucleotide sequence ID" value="NC_000913.3"/>
</dbReference>
<dbReference type="RefSeq" id="WP_001301325.1">
    <property type="nucleotide sequence ID" value="NZ_SSZK01000061.1"/>
</dbReference>
<dbReference type="SMR" id="P77569"/>
<dbReference type="BioGRID" id="4260667">
    <property type="interactions" value="125"/>
</dbReference>
<dbReference type="DIP" id="DIP-10211N"/>
<dbReference type="FunCoup" id="P77569">
    <property type="interactions" value="40"/>
</dbReference>
<dbReference type="IntAct" id="P77569">
    <property type="interactions" value="4"/>
</dbReference>
<dbReference type="STRING" id="511145.b0346"/>
<dbReference type="jPOST" id="P77569"/>
<dbReference type="PaxDb" id="511145-b0346"/>
<dbReference type="DNASU" id="945938"/>
<dbReference type="EnsemblBacteria" id="AAC73449">
    <property type="protein sequence ID" value="AAC73449"/>
    <property type="gene ID" value="b0346"/>
</dbReference>
<dbReference type="GeneID" id="945938"/>
<dbReference type="KEGG" id="ecj:JW0337"/>
<dbReference type="KEGG" id="eco:b0346"/>
<dbReference type="KEGG" id="ecoc:C3026_01705"/>
<dbReference type="KEGG" id="ecoc:C3026_24865"/>
<dbReference type="PATRIC" id="fig|1411691.4.peg.1932"/>
<dbReference type="EchoBASE" id="EB4169"/>
<dbReference type="eggNOG" id="COG1414">
    <property type="taxonomic scope" value="Bacteria"/>
</dbReference>
<dbReference type="HOGENOM" id="CLU_062618_1_0_6"/>
<dbReference type="InParanoid" id="P77569"/>
<dbReference type="PhylomeDB" id="P77569"/>
<dbReference type="BioCyc" id="EcoCyc:G6201-MONOMER"/>
<dbReference type="PRO" id="PR:P77569"/>
<dbReference type="Proteomes" id="UP000000625">
    <property type="component" value="Chromosome"/>
</dbReference>
<dbReference type="GO" id="GO:0003677">
    <property type="term" value="F:DNA binding"/>
    <property type="evidence" value="ECO:0000318"/>
    <property type="project" value="GO_Central"/>
</dbReference>
<dbReference type="GO" id="GO:0003700">
    <property type="term" value="F:DNA-binding transcription factor activity"/>
    <property type="evidence" value="ECO:0000318"/>
    <property type="project" value="GO_Central"/>
</dbReference>
<dbReference type="GO" id="GO:0009056">
    <property type="term" value="P:catabolic process"/>
    <property type="evidence" value="ECO:0007669"/>
    <property type="project" value="UniProtKB-KW"/>
</dbReference>
<dbReference type="GO" id="GO:0045892">
    <property type="term" value="P:negative regulation of DNA-templated transcription"/>
    <property type="evidence" value="ECO:0000318"/>
    <property type="project" value="GO_Central"/>
</dbReference>
<dbReference type="Gene3D" id="3.30.450.40">
    <property type="match status" value="1"/>
</dbReference>
<dbReference type="Gene3D" id="1.10.10.10">
    <property type="entry name" value="Winged helix-like DNA-binding domain superfamily/Winged helix DNA-binding domain"/>
    <property type="match status" value="1"/>
</dbReference>
<dbReference type="InterPro" id="IPR029016">
    <property type="entry name" value="GAF-like_dom_sf"/>
</dbReference>
<dbReference type="InterPro" id="IPR050707">
    <property type="entry name" value="HTH_MetabolicPath_Reg"/>
</dbReference>
<dbReference type="InterPro" id="IPR014757">
    <property type="entry name" value="Tscrpt_reg_IclR_C"/>
</dbReference>
<dbReference type="InterPro" id="IPR005471">
    <property type="entry name" value="Tscrpt_reg_IclR_N"/>
</dbReference>
<dbReference type="InterPro" id="IPR036388">
    <property type="entry name" value="WH-like_DNA-bd_sf"/>
</dbReference>
<dbReference type="InterPro" id="IPR036390">
    <property type="entry name" value="WH_DNA-bd_sf"/>
</dbReference>
<dbReference type="NCBIfam" id="NF007341">
    <property type="entry name" value="PRK09834.1-3"/>
    <property type="match status" value="1"/>
</dbReference>
<dbReference type="PANTHER" id="PTHR30136:SF23">
    <property type="entry name" value="DNA-BINDING TRANSCRIPTIONAL ACTIVATOR MHPR"/>
    <property type="match status" value="1"/>
</dbReference>
<dbReference type="PANTHER" id="PTHR30136">
    <property type="entry name" value="HELIX-TURN-HELIX TRANSCRIPTIONAL REGULATOR, ICLR FAMILY"/>
    <property type="match status" value="1"/>
</dbReference>
<dbReference type="Pfam" id="PF09339">
    <property type="entry name" value="HTH_IclR"/>
    <property type="match status" value="1"/>
</dbReference>
<dbReference type="Pfam" id="PF01614">
    <property type="entry name" value="IclR_C"/>
    <property type="match status" value="1"/>
</dbReference>
<dbReference type="SMART" id="SM00346">
    <property type="entry name" value="HTH_ICLR"/>
    <property type="match status" value="1"/>
</dbReference>
<dbReference type="SUPFAM" id="SSF55781">
    <property type="entry name" value="GAF domain-like"/>
    <property type="match status" value="1"/>
</dbReference>
<dbReference type="SUPFAM" id="SSF46785">
    <property type="entry name" value="Winged helix' DNA-binding domain"/>
    <property type="match status" value="1"/>
</dbReference>
<dbReference type="PROSITE" id="PS51077">
    <property type="entry name" value="HTH_ICLR"/>
    <property type="match status" value="1"/>
</dbReference>
<dbReference type="PROSITE" id="PS51078">
    <property type="entry name" value="ICLR_ED"/>
    <property type="match status" value="1"/>
</dbReference>
<name>MHPR_ECOLI</name>
<gene>
    <name type="primary">mhpR</name>
    <name type="ordered locus">b0346</name>
    <name type="ordered locus">JW0337</name>
</gene>
<keyword id="KW-0010">Activator</keyword>
<keyword id="KW-0058">Aromatic hydrocarbons catabolism</keyword>
<keyword id="KW-0238">DNA-binding</keyword>
<keyword id="KW-1185">Reference proteome</keyword>
<keyword id="KW-0804">Transcription</keyword>
<keyword id="KW-0805">Transcription regulation</keyword>
<sequence length="277" mass="31322">MQNNEQTEYKTVRGLTRGLMLLNMLNKLDGGASVGLLAELSGLHRTTVRRLLETLQEEGYVRRSPSDDSFRLTIKVRQLSEGFRDEQWISALAAPLLGDLLREVVWPTDVSTLDVDAMVVRETTHRFSRLSFHRAMVGRRLPLLKTASGLTWLAFCPEQDRKELIEMLASRPGDDYQLAREPLKLEAILARARKEGYGQNYRGWDQEEKIASIAVPLRSEQRVIGCLNLVYMASAMTIEQAAEKHLPALQRVAKQIEEGVESQAILVAGRRSGMHLR</sequence>
<comment type="function">
    <text evidence="3">Activator of the mhpABCDFE operon coding for components of the 3-hydroxyphenylpropionate degradation pathway.</text>
</comment>
<comment type="sequence caution" evidence="4">
    <conflict type="erroneous initiation">
        <sequence resource="EMBL-CDS" id="AAB18070"/>
    </conflict>
    <text>Extended N-terminus.</text>
</comment>
<comment type="sequence caution" evidence="4">
    <conflict type="erroneous initiation">
        <sequence resource="EMBL-CDS" id="BAA13051"/>
    </conflict>
    <text>Extended N-terminus.</text>
</comment>
<comment type="sequence caution" evidence="4">
    <conflict type="erroneous initiation">
        <sequence resource="EMBL-CDS" id="BAE76128"/>
    </conflict>
    <text>Extended N-terminus.</text>
</comment>
<comment type="sequence caution" evidence="4">
    <conflict type="erroneous initiation">
        <sequence resource="EMBL-CDS" id="CAA70746"/>
    </conflict>
    <text>Extended N-terminus.</text>
</comment>
<reference key="1">
    <citation type="journal article" date="1997" name="J. Bacteriol.">
        <title>Genetic characterization and expression in heterologous hosts of the 3-(3-hydroxyphenyl)propionate catabolic pathway of Escherichia coli K-12.</title>
        <authorList>
            <person name="Ferrandez A."/>
            <person name="Garcia J.L."/>
            <person name="Diaz E."/>
        </authorList>
    </citation>
    <scope>NUCLEOTIDE SEQUENCE [GENOMIC DNA]</scope>
    <scope>FUNCTION</scope>
    <source>
        <strain>K12 / CS520</strain>
    </source>
</reference>
<reference key="2">
    <citation type="submission" date="1996-06" db="EMBL/GenBank/DDBJ databases">
        <title>Complete sequence of the mhp operon.</title>
        <authorList>
            <person name="Kawamukai M."/>
        </authorList>
    </citation>
    <scope>NUCLEOTIDE SEQUENCE [GENOMIC DNA]</scope>
    <source>
        <strain>K12 / W3110 / ATCC 27325 / DSM 5911</strain>
    </source>
</reference>
<reference key="3">
    <citation type="submission" date="1997-01" db="EMBL/GenBank/DDBJ databases">
        <title>Sequence of minutes 4-25 of Escherichia coli.</title>
        <authorList>
            <person name="Chung E."/>
            <person name="Allen E."/>
            <person name="Araujo R."/>
            <person name="Aparicio A.M."/>
            <person name="Davis K."/>
            <person name="Duncan M."/>
            <person name="Federspiel N."/>
            <person name="Hyman R."/>
            <person name="Kalman S."/>
            <person name="Komp C."/>
            <person name="Kurdi O."/>
            <person name="Lew H."/>
            <person name="Lin D."/>
            <person name="Namath A."/>
            <person name="Oefner P."/>
            <person name="Roberts D."/>
            <person name="Schramm S."/>
            <person name="Davis R.W."/>
        </authorList>
    </citation>
    <scope>NUCLEOTIDE SEQUENCE [LARGE SCALE GENOMIC DNA]</scope>
    <source>
        <strain>K12 / MG1655 / ATCC 47076</strain>
    </source>
</reference>
<reference key="4">
    <citation type="journal article" date="1997" name="Science">
        <title>The complete genome sequence of Escherichia coli K-12.</title>
        <authorList>
            <person name="Blattner F.R."/>
            <person name="Plunkett G. III"/>
            <person name="Bloch C.A."/>
            <person name="Perna N.T."/>
            <person name="Burland V."/>
            <person name="Riley M."/>
            <person name="Collado-Vides J."/>
            <person name="Glasner J.D."/>
            <person name="Rode C.K."/>
            <person name="Mayhew G.F."/>
            <person name="Gregor J."/>
            <person name="Davis N.W."/>
            <person name="Kirkpatrick H.A."/>
            <person name="Goeden M.A."/>
            <person name="Rose D.J."/>
            <person name="Mau B."/>
            <person name="Shao Y."/>
        </authorList>
    </citation>
    <scope>NUCLEOTIDE SEQUENCE [LARGE SCALE GENOMIC DNA]</scope>
    <source>
        <strain>K12 / MG1655 / ATCC 47076</strain>
    </source>
</reference>
<reference key="5">
    <citation type="journal article" date="2006" name="Mol. Syst. Biol.">
        <title>Highly accurate genome sequences of Escherichia coli K-12 strains MG1655 and W3110.</title>
        <authorList>
            <person name="Hayashi K."/>
            <person name="Morooka N."/>
            <person name="Yamamoto Y."/>
            <person name="Fujita K."/>
            <person name="Isono K."/>
            <person name="Choi S."/>
            <person name="Ohtsubo E."/>
            <person name="Baba T."/>
            <person name="Wanner B.L."/>
            <person name="Mori H."/>
            <person name="Horiuchi T."/>
        </authorList>
    </citation>
    <scope>NUCLEOTIDE SEQUENCE [LARGE SCALE GENOMIC DNA]</scope>
    <source>
        <strain>K12 / W3110 / ATCC 27325 / DSM 5911</strain>
    </source>
</reference>
<feature type="chain" id="PRO_0000201763" description="DNA-binding transcriptional activator MhpR">
    <location>
        <begin position="1"/>
        <end position="277"/>
    </location>
</feature>
<feature type="domain" description="HTH iclR-type" evidence="1">
    <location>
        <begin position="12"/>
        <end position="74"/>
    </location>
</feature>
<feature type="domain" description="IclR-ED" evidence="2">
    <location>
        <begin position="89"/>
        <end position="262"/>
    </location>
</feature>
<feature type="DNA-binding region" description="H-T-H motif" evidence="1">
    <location>
        <begin position="34"/>
        <end position="53"/>
    </location>
</feature>
<feature type="sequence conflict" description="In Ref. 2; BAA13051." evidence="4" ref="2">
    <original>L</original>
    <variation>Q</variation>
    <location>
        <position position="249"/>
    </location>
</feature>
<feature type="sequence conflict" description="In Ref. 2; BAA13051." evidence="4" ref="2">
    <original>IEEGVESQAILVAGRRSGMHLR</original>
    <variation>NRRRG</variation>
    <location>
        <begin position="256"/>
        <end position="277"/>
    </location>
</feature>
<protein>
    <recommendedName>
        <fullName evidence="4">DNA-binding transcriptional activator MhpR</fullName>
    </recommendedName>
    <alternativeName>
        <fullName>mhp operon transcriptional activator</fullName>
    </alternativeName>
</protein>
<organism>
    <name type="scientific">Escherichia coli (strain K12)</name>
    <dbReference type="NCBI Taxonomy" id="83333"/>
    <lineage>
        <taxon>Bacteria</taxon>
        <taxon>Pseudomonadati</taxon>
        <taxon>Pseudomonadota</taxon>
        <taxon>Gammaproteobacteria</taxon>
        <taxon>Enterobacterales</taxon>
        <taxon>Enterobacteriaceae</taxon>
        <taxon>Escherichia</taxon>
    </lineage>
</organism>
<accession>P77569</accession>
<accession>P71202</accession>
<accession>Q2MC78</accession>
<evidence type="ECO:0000255" key="1">
    <source>
        <dbReference type="PROSITE-ProRule" id="PRU00393"/>
    </source>
</evidence>
<evidence type="ECO:0000255" key="2">
    <source>
        <dbReference type="PROSITE-ProRule" id="PRU00394"/>
    </source>
</evidence>
<evidence type="ECO:0000269" key="3">
    <source>
    </source>
</evidence>
<evidence type="ECO:0000305" key="4"/>